<name>PG051_VACCP</name>
<reference key="1">
    <citation type="journal article" date="1988" name="Biotekhnologiya">
        <title>Structural-functional organization of segment of vaccinia virus genome.</title>
        <authorList>
            <person name="Mikryukov N.N."/>
            <person name="Chizhikov V.E."/>
            <person name="Prikhod'Ko G.G."/>
            <person name="Urmmanov I.M."/>
            <person name="Serpinskii O.I."/>
            <person name="Blinov V.M."/>
            <person name="Nikulin A.E."/>
            <person name="Vasilenko S.K."/>
        </authorList>
    </citation>
    <scope>NUCLEOTIDE SEQUENCE [GENOMIC DNA]</scope>
</reference>
<sequence length="80" mass="9441">MTLVMGCCCGRFCDAKNKNKKEDVEEGREGCYNYKNLNDLDESEARVEFGPLYMINEEKSDINTLDIKRRYRHTIESVYF</sequence>
<keyword id="KW-0244">Early protein</keyword>
<protein>
    <recommendedName>
        <fullName>Protein OPG051</fullName>
    </recommendedName>
    <alternativeName>
        <fullName>Protein F11</fullName>
    </alternativeName>
    <alternativeName>
        <fullName>Protein F7</fullName>
    </alternativeName>
</protein>
<organism>
    <name type="scientific">Vaccinia virus (strain L-IVP)</name>
    <name type="common">VACV</name>
    <dbReference type="NCBI Taxonomy" id="31531"/>
    <lineage>
        <taxon>Viruses</taxon>
        <taxon>Varidnaviria</taxon>
        <taxon>Bamfordvirae</taxon>
        <taxon>Nucleocytoviricota</taxon>
        <taxon>Pokkesviricetes</taxon>
        <taxon>Chitovirales</taxon>
        <taxon>Poxviridae</taxon>
        <taxon>Chordopoxvirinae</taxon>
        <taxon>Orthopoxvirus</taxon>
        <taxon>Vaccinia virus</taxon>
    </lineage>
</organism>
<organismHost>
    <name type="scientific">Homo sapiens</name>
    <name type="common">Human</name>
    <dbReference type="NCBI Taxonomy" id="9606"/>
</organismHost>
<comment type="induction">
    <text evidence="1">Expressed in the early phase of the viral replicative cycle.</text>
</comment>
<comment type="similarity">
    <text evidence="2">Belongs to the orthopoxvirus OPG051 family.</text>
</comment>
<dbReference type="EMBL" id="M57977">
    <property type="protein sequence ID" value="AAA48291.1"/>
    <property type="molecule type" value="Genomic_DNA"/>
</dbReference>
<dbReference type="InterPro" id="IPR008725">
    <property type="entry name" value="Orthopox_F7"/>
</dbReference>
<dbReference type="Pfam" id="PF05813">
    <property type="entry name" value="Orthopox_F7"/>
    <property type="match status" value="1"/>
</dbReference>
<feature type="chain" id="PRO_0000099484" description="Protein OPG051">
    <location>
        <begin position="1"/>
        <end position="80"/>
    </location>
</feature>
<evidence type="ECO:0000250" key="1">
    <source>
        <dbReference type="UniProtKB" id="P24359"/>
    </source>
</evidence>
<evidence type="ECO:0000305" key="2"/>
<proteinExistence type="inferred from homology"/>
<accession>P29886</accession>
<gene>
    <name type="primary">OPG051</name>
    <name type="ORF">F11</name>
</gene>